<dbReference type="EC" id="2.1.1.33" evidence="2"/>
<dbReference type="EMBL" id="CP000359">
    <property type="protein sequence ID" value="ABF46384.1"/>
    <property type="molecule type" value="Genomic_DNA"/>
</dbReference>
<dbReference type="RefSeq" id="WP_011531210.1">
    <property type="nucleotide sequence ID" value="NC_008025.1"/>
</dbReference>
<dbReference type="SMR" id="Q1IWK0"/>
<dbReference type="STRING" id="319795.Dgeo_2090"/>
<dbReference type="KEGG" id="dge:Dgeo_2090"/>
<dbReference type="eggNOG" id="COG0220">
    <property type="taxonomic scope" value="Bacteria"/>
</dbReference>
<dbReference type="HOGENOM" id="CLU_077150_0_0_0"/>
<dbReference type="UniPathway" id="UPA00989"/>
<dbReference type="Proteomes" id="UP000002431">
    <property type="component" value="Chromosome"/>
</dbReference>
<dbReference type="GO" id="GO:0043527">
    <property type="term" value="C:tRNA methyltransferase complex"/>
    <property type="evidence" value="ECO:0007669"/>
    <property type="project" value="TreeGrafter"/>
</dbReference>
<dbReference type="GO" id="GO:0008176">
    <property type="term" value="F:tRNA (guanine(46)-N7)-methyltransferase activity"/>
    <property type="evidence" value="ECO:0007669"/>
    <property type="project" value="UniProtKB-UniRule"/>
</dbReference>
<dbReference type="CDD" id="cd02440">
    <property type="entry name" value="AdoMet_MTases"/>
    <property type="match status" value="1"/>
</dbReference>
<dbReference type="Gene3D" id="3.40.50.150">
    <property type="entry name" value="Vaccinia Virus protein VP39"/>
    <property type="match status" value="1"/>
</dbReference>
<dbReference type="HAMAP" id="MF_01057">
    <property type="entry name" value="tRNA_methyltr_TrmB"/>
    <property type="match status" value="1"/>
</dbReference>
<dbReference type="InterPro" id="IPR029063">
    <property type="entry name" value="SAM-dependent_MTases_sf"/>
</dbReference>
<dbReference type="InterPro" id="IPR003358">
    <property type="entry name" value="tRNA_(Gua-N-7)_MeTrfase_Trmb"/>
</dbReference>
<dbReference type="InterPro" id="IPR055361">
    <property type="entry name" value="tRNA_methyltr_TrmB_bact"/>
</dbReference>
<dbReference type="PANTHER" id="PTHR23417">
    <property type="entry name" value="3-DEOXY-D-MANNO-OCTULOSONIC-ACID TRANSFERASE/TRNA GUANINE-N 7 - -METHYLTRANSFERASE"/>
    <property type="match status" value="1"/>
</dbReference>
<dbReference type="PANTHER" id="PTHR23417:SF14">
    <property type="entry name" value="PENTACOTRIPEPTIDE-REPEAT REGION OF PRORP DOMAIN-CONTAINING PROTEIN"/>
    <property type="match status" value="1"/>
</dbReference>
<dbReference type="Pfam" id="PF02390">
    <property type="entry name" value="Methyltransf_4"/>
    <property type="match status" value="1"/>
</dbReference>
<dbReference type="SUPFAM" id="SSF53335">
    <property type="entry name" value="S-adenosyl-L-methionine-dependent methyltransferases"/>
    <property type="match status" value="1"/>
</dbReference>
<dbReference type="PROSITE" id="PS51625">
    <property type="entry name" value="SAM_MT_TRMB"/>
    <property type="match status" value="1"/>
</dbReference>
<gene>
    <name evidence="2" type="primary">trmB</name>
    <name type="ordered locus">Dgeo_2090</name>
</gene>
<name>TRMB_DEIGD</name>
<organism>
    <name type="scientific">Deinococcus geothermalis (strain DSM 11300 / CIP 105573 / AG-3a)</name>
    <dbReference type="NCBI Taxonomy" id="319795"/>
    <lineage>
        <taxon>Bacteria</taxon>
        <taxon>Thermotogati</taxon>
        <taxon>Deinococcota</taxon>
        <taxon>Deinococci</taxon>
        <taxon>Deinococcales</taxon>
        <taxon>Deinococcaceae</taxon>
        <taxon>Deinococcus</taxon>
    </lineage>
</organism>
<feature type="chain" id="PRO_0000288144" description="tRNA (guanine-N(7)-)-methyltransferase">
    <location>
        <begin position="1"/>
        <end position="331"/>
    </location>
</feature>
<feature type="active site" evidence="1">
    <location>
        <position position="105"/>
    </location>
</feature>
<feature type="binding site" evidence="2">
    <location>
        <position position="29"/>
    </location>
    <ligand>
        <name>S-adenosyl-L-methionine</name>
        <dbReference type="ChEBI" id="CHEBI:59789"/>
    </ligand>
</feature>
<feature type="binding site" evidence="2">
    <location>
        <position position="55"/>
    </location>
    <ligand>
        <name>S-adenosyl-L-methionine</name>
        <dbReference type="ChEBI" id="CHEBI:59789"/>
    </ligand>
</feature>
<feature type="binding site" evidence="2">
    <location>
        <position position="105"/>
    </location>
    <ligand>
        <name>S-adenosyl-L-methionine</name>
        <dbReference type="ChEBI" id="CHEBI:59789"/>
    </ligand>
</feature>
<feature type="binding site" evidence="2">
    <location>
        <position position="109"/>
    </location>
    <ligand>
        <name>substrate</name>
    </ligand>
</feature>
<feature type="binding site" evidence="2">
    <location>
        <position position="141"/>
    </location>
    <ligand>
        <name>substrate</name>
    </ligand>
</feature>
<reference key="1">
    <citation type="submission" date="2006-04" db="EMBL/GenBank/DDBJ databases">
        <title>Complete sequence of chromosome of Deinococcus geothermalis DSM 11300.</title>
        <authorList>
            <person name="Copeland A."/>
            <person name="Lucas S."/>
            <person name="Lapidus A."/>
            <person name="Barry K."/>
            <person name="Detter J.C."/>
            <person name="Glavina del Rio T."/>
            <person name="Hammon N."/>
            <person name="Israni S."/>
            <person name="Dalin E."/>
            <person name="Tice H."/>
            <person name="Pitluck S."/>
            <person name="Brettin T."/>
            <person name="Bruce D."/>
            <person name="Han C."/>
            <person name="Tapia R."/>
            <person name="Saunders E."/>
            <person name="Gilna P."/>
            <person name="Schmutz J."/>
            <person name="Larimer F."/>
            <person name="Land M."/>
            <person name="Hauser L."/>
            <person name="Kyrpides N."/>
            <person name="Kim E."/>
            <person name="Daly M.J."/>
            <person name="Fredrickson J.K."/>
            <person name="Makarova K.S."/>
            <person name="Gaidamakova E.K."/>
            <person name="Zhai M."/>
            <person name="Richardson P."/>
        </authorList>
    </citation>
    <scope>NUCLEOTIDE SEQUENCE [LARGE SCALE GENOMIC DNA]</scope>
    <source>
        <strain>DSM 11300 / CIP 105573 / AG-3a</strain>
    </source>
</reference>
<proteinExistence type="inferred from homology"/>
<keyword id="KW-0489">Methyltransferase</keyword>
<keyword id="KW-0949">S-adenosyl-L-methionine</keyword>
<keyword id="KW-0808">Transferase</keyword>
<keyword id="KW-0819">tRNA processing</keyword>
<sequence length="331" mass="36336">MIFRLADFHFPDSAARLYPDTPQRPWILEVGFGDGRFWPHYAATFPEAPNYLGVEISGVSLLKAERRLREAGLSNAVLTKLPATPLIREVVPAGSLDAIVVNFPDPWPKAGHAEHRLLRAPFFRLAASRLKPGGAVLLTTDHDEYFEFACREAEASGVMRAELTDPPPAALETKYARKWRELGLEVQHARFVPTHHPHVPHGTVARFPDSEDAPAVPHAILTLPAAFDPGAFHKHTARGGQTREDPVGWTVVLLELYRSLKQDGWVMLAHVVEGELTQEVLIGISARGDGSHLVRLASFGGPIITPGVKAAVGVVTDWLEEQGAAVRHRGY</sequence>
<comment type="function">
    <text evidence="2">Catalyzes the formation of N(7)-methylguanine at position 46 (m7G46) in tRNA.</text>
</comment>
<comment type="catalytic activity">
    <reaction evidence="2">
        <text>guanosine(46) in tRNA + S-adenosyl-L-methionine = N(7)-methylguanosine(46) in tRNA + S-adenosyl-L-homocysteine</text>
        <dbReference type="Rhea" id="RHEA:42708"/>
        <dbReference type="Rhea" id="RHEA-COMP:10188"/>
        <dbReference type="Rhea" id="RHEA-COMP:10189"/>
        <dbReference type="ChEBI" id="CHEBI:57856"/>
        <dbReference type="ChEBI" id="CHEBI:59789"/>
        <dbReference type="ChEBI" id="CHEBI:74269"/>
        <dbReference type="ChEBI" id="CHEBI:74480"/>
        <dbReference type="EC" id="2.1.1.33"/>
    </reaction>
</comment>
<comment type="pathway">
    <text evidence="2">tRNA modification; N(7)-methylguanine-tRNA biosynthesis.</text>
</comment>
<comment type="similarity">
    <text evidence="2">Belongs to the class I-like SAM-binding methyltransferase superfamily. TrmB family.</text>
</comment>
<protein>
    <recommendedName>
        <fullName evidence="2">tRNA (guanine-N(7)-)-methyltransferase</fullName>
        <ecNumber evidence="2">2.1.1.33</ecNumber>
    </recommendedName>
    <alternativeName>
        <fullName evidence="2">tRNA (guanine(46)-N(7))-methyltransferase</fullName>
    </alternativeName>
    <alternativeName>
        <fullName evidence="2">tRNA(m7G46)-methyltransferase</fullName>
    </alternativeName>
</protein>
<evidence type="ECO:0000250" key="1"/>
<evidence type="ECO:0000255" key="2">
    <source>
        <dbReference type="HAMAP-Rule" id="MF_01057"/>
    </source>
</evidence>
<accession>Q1IWK0</accession>